<dbReference type="EMBL" id="BA000018">
    <property type="protein sequence ID" value="BAB43783.1"/>
    <property type="molecule type" value="Genomic_DNA"/>
</dbReference>
<dbReference type="PIR" id="E90077">
    <property type="entry name" value="E90077"/>
</dbReference>
<dbReference type="RefSeq" id="WP_000743711.1">
    <property type="nucleotide sequence ID" value="NC_002745.2"/>
</dbReference>
<dbReference type="EnsemblBacteria" id="BAB43783">
    <property type="protein sequence ID" value="BAB43783"/>
    <property type="gene ID" value="BAB43783"/>
</dbReference>
<dbReference type="KEGG" id="sau:SA2477"/>
<dbReference type="HOGENOM" id="CLU_120023_0_0_9"/>
<dbReference type="GO" id="GO:0005886">
    <property type="term" value="C:plasma membrane"/>
    <property type="evidence" value="ECO:0007669"/>
    <property type="project" value="UniProtKB-SubCell"/>
</dbReference>
<dbReference type="Gene3D" id="1.10.1760.20">
    <property type="match status" value="1"/>
</dbReference>
<dbReference type="HAMAP" id="MF_01572">
    <property type="entry name" value="UPF0397"/>
    <property type="match status" value="1"/>
</dbReference>
<dbReference type="InterPro" id="IPR009825">
    <property type="entry name" value="ECF_substrate-spec-like"/>
</dbReference>
<dbReference type="InterPro" id="IPR022914">
    <property type="entry name" value="UPF0397"/>
</dbReference>
<dbReference type="NCBIfam" id="NF010182">
    <property type="entry name" value="PRK13661.1"/>
    <property type="match status" value="1"/>
</dbReference>
<dbReference type="PANTHER" id="PTHR37815">
    <property type="entry name" value="UPF0397 PROTEIN BC_2624-RELATED"/>
    <property type="match status" value="1"/>
</dbReference>
<dbReference type="PANTHER" id="PTHR37815:SF3">
    <property type="entry name" value="UPF0397 PROTEIN SPR0429"/>
    <property type="match status" value="1"/>
</dbReference>
<dbReference type="Pfam" id="PF07155">
    <property type="entry name" value="ECF-ribofla_trS"/>
    <property type="match status" value="1"/>
</dbReference>
<reference key="1">
    <citation type="journal article" date="2001" name="Lancet">
        <title>Whole genome sequencing of meticillin-resistant Staphylococcus aureus.</title>
        <authorList>
            <person name="Kuroda M."/>
            <person name="Ohta T."/>
            <person name="Uchiyama I."/>
            <person name="Baba T."/>
            <person name="Yuzawa H."/>
            <person name="Kobayashi I."/>
            <person name="Cui L."/>
            <person name="Oguchi A."/>
            <person name="Aoki K."/>
            <person name="Nagai Y."/>
            <person name="Lian J.-Q."/>
            <person name="Ito T."/>
            <person name="Kanamori M."/>
            <person name="Matsumaru H."/>
            <person name="Maruyama A."/>
            <person name="Murakami H."/>
            <person name="Hosoyama A."/>
            <person name="Mizutani-Ui Y."/>
            <person name="Takahashi N.K."/>
            <person name="Sawano T."/>
            <person name="Inoue R."/>
            <person name="Kaito C."/>
            <person name="Sekimizu K."/>
            <person name="Hirakawa H."/>
            <person name="Kuhara S."/>
            <person name="Goto S."/>
            <person name="Yabuzaki J."/>
            <person name="Kanehisa M."/>
            <person name="Yamashita A."/>
            <person name="Oshima K."/>
            <person name="Furuya K."/>
            <person name="Yoshino C."/>
            <person name="Shiba T."/>
            <person name="Hattori M."/>
            <person name="Ogasawara N."/>
            <person name="Hayashi H."/>
            <person name="Hiramatsu K."/>
        </authorList>
    </citation>
    <scope>NUCLEOTIDE SEQUENCE [LARGE SCALE GENOMIC DNA]</scope>
    <source>
        <strain>N315</strain>
    </source>
</reference>
<comment type="subcellular location">
    <subcellularLocation>
        <location evidence="1">Cell membrane</location>
        <topology evidence="1">Multi-pass membrane protein</topology>
    </subcellularLocation>
</comment>
<comment type="similarity">
    <text evidence="1">Belongs to the UPF0397 family.</text>
</comment>
<name>Y2477_STAAN</name>
<gene>
    <name type="ordered locus">SA2477</name>
</gene>
<accession>Q7A341</accession>
<feature type="chain" id="PRO_0000260806" description="UPF0397 protein SA2477">
    <location>
        <begin position="1"/>
        <end position="184"/>
    </location>
</feature>
<feature type="transmembrane region" description="Helical" evidence="1">
    <location>
        <begin position="11"/>
        <end position="31"/>
    </location>
</feature>
<feature type="transmembrane region" description="Helical" evidence="1">
    <location>
        <begin position="44"/>
        <end position="64"/>
    </location>
</feature>
<feature type="transmembrane region" description="Helical" evidence="1">
    <location>
        <begin position="77"/>
        <end position="97"/>
    </location>
</feature>
<feature type="transmembrane region" description="Helical" evidence="1">
    <location>
        <begin position="111"/>
        <end position="131"/>
    </location>
</feature>
<feature type="transmembrane region" description="Helical" evidence="1">
    <location>
        <begin position="148"/>
        <end position="168"/>
    </location>
</feature>
<keyword id="KW-1003">Cell membrane</keyword>
<keyword id="KW-0472">Membrane</keyword>
<keyword id="KW-0812">Transmembrane</keyword>
<keyword id="KW-1133">Transmembrane helix</keyword>
<protein>
    <recommendedName>
        <fullName evidence="1">UPF0397 protein SA2477</fullName>
    </recommendedName>
</protein>
<sequence length="184" mass="19811">MKKQDISVKTVVAIGIGAAVFVILGRFVVIPTGFPNTNIETSYAFLALISAIFGPFAGLMTGLVGHAIKDFTTYGSAWWSWVICSGIIGCLYGWIGLKLNLSSGLFSRKSMIYFNIGQIIANIICWALIAPTLDILIYNEPANKVYTQGVISAVLNIISVGIIGTILLKAYASSQIKKGSLRKE</sequence>
<organism>
    <name type="scientific">Staphylococcus aureus (strain N315)</name>
    <dbReference type="NCBI Taxonomy" id="158879"/>
    <lineage>
        <taxon>Bacteria</taxon>
        <taxon>Bacillati</taxon>
        <taxon>Bacillota</taxon>
        <taxon>Bacilli</taxon>
        <taxon>Bacillales</taxon>
        <taxon>Staphylococcaceae</taxon>
        <taxon>Staphylococcus</taxon>
    </lineage>
</organism>
<evidence type="ECO:0000255" key="1">
    <source>
        <dbReference type="HAMAP-Rule" id="MF_01572"/>
    </source>
</evidence>
<proteinExistence type="inferred from homology"/>